<reference key="1">
    <citation type="journal article" date="2006" name="PLoS Genet.">
        <title>Genome sequence of Rickettsia bellii illuminates the role of amoebae in gene exchanges between intracellular pathogens.</title>
        <authorList>
            <person name="Ogata H."/>
            <person name="La Scola B."/>
            <person name="Audic S."/>
            <person name="Renesto P."/>
            <person name="Blanc G."/>
            <person name="Robert C."/>
            <person name="Fournier P.-E."/>
            <person name="Claverie J.-M."/>
            <person name="Raoult D."/>
        </authorList>
    </citation>
    <scope>NUCLEOTIDE SEQUENCE [LARGE SCALE GENOMIC DNA]</scope>
    <source>
        <strain>RML369-C</strain>
    </source>
</reference>
<organism>
    <name type="scientific">Rickettsia bellii (strain RML369-C)</name>
    <dbReference type="NCBI Taxonomy" id="336407"/>
    <lineage>
        <taxon>Bacteria</taxon>
        <taxon>Pseudomonadati</taxon>
        <taxon>Pseudomonadota</taxon>
        <taxon>Alphaproteobacteria</taxon>
        <taxon>Rickettsiales</taxon>
        <taxon>Rickettsiaceae</taxon>
        <taxon>Rickettsieae</taxon>
        <taxon>Rickettsia</taxon>
        <taxon>belli group</taxon>
    </lineage>
</organism>
<dbReference type="EMBL" id="CP000087">
    <property type="protein sequence ID" value="ABE05240.1"/>
    <property type="molecule type" value="Genomic_DNA"/>
</dbReference>
<dbReference type="RefSeq" id="WP_011477818.1">
    <property type="nucleotide sequence ID" value="NC_007940.1"/>
</dbReference>
<dbReference type="SMR" id="Q1RHC4"/>
<dbReference type="KEGG" id="rbe:RBE_1159"/>
<dbReference type="eggNOG" id="COG0690">
    <property type="taxonomic scope" value="Bacteria"/>
</dbReference>
<dbReference type="HOGENOM" id="CLU_113663_4_2_5"/>
<dbReference type="OrthoDB" id="9812738at2"/>
<dbReference type="Proteomes" id="UP000001951">
    <property type="component" value="Chromosome"/>
</dbReference>
<dbReference type="GO" id="GO:0005886">
    <property type="term" value="C:plasma membrane"/>
    <property type="evidence" value="ECO:0007669"/>
    <property type="project" value="UniProtKB-SubCell"/>
</dbReference>
<dbReference type="GO" id="GO:0008320">
    <property type="term" value="F:protein transmembrane transporter activity"/>
    <property type="evidence" value="ECO:0007669"/>
    <property type="project" value="UniProtKB-UniRule"/>
</dbReference>
<dbReference type="GO" id="GO:0065002">
    <property type="term" value="P:intracellular protein transmembrane transport"/>
    <property type="evidence" value="ECO:0007669"/>
    <property type="project" value="UniProtKB-UniRule"/>
</dbReference>
<dbReference type="GO" id="GO:0009306">
    <property type="term" value="P:protein secretion"/>
    <property type="evidence" value="ECO:0007669"/>
    <property type="project" value="UniProtKB-UniRule"/>
</dbReference>
<dbReference type="GO" id="GO:0006605">
    <property type="term" value="P:protein targeting"/>
    <property type="evidence" value="ECO:0007669"/>
    <property type="project" value="UniProtKB-UniRule"/>
</dbReference>
<dbReference type="GO" id="GO:0043952">
    <property type="term" value="P:protein transport by the Sec complex"/>
    <property type="evidence" value="ECO:0007669"/>
    <property type="project" value="UniProtKB-UniRule"/>
</dbReference>
<dbReference type="Gene3D" id="1.20.5.1030">
    <property type="entry name" value="Preprotein translocase secy subunit"/>
    <property type="match status" value="1"/>
</dbReference>
<dbReference type="HAMAP" id="MF_00422">
    <property type="entry name" value="SecE"/>
    <property type="match status" value="1"/>
</dbReference>
<dbReference type="InterPro" id="IPR005807">
    <property type="entry name" value="SecE_bac"/>
</dbReference>
<dbReference type="InterPro" id="IPR038379">
    <property type="entry name" value="SecE_sf"/>
</dbReference>
<dbReference type="InterPro" id="IPR001901">
    <property type="entry name" value="Translocase_SecE/Sec61-g"/>
</dbReference>
<dbReference type="NCBIfam" id="TIGR00964">
    <property type="entry name" value="secE_bact"/>
    <property type="match status" value="1"/>
</dbReference>
<dbReference type="PANTHER" id="PTHR33910">
    <property type="entry name" value="PROTEIN TRANSLOCASE SUBUNIT SECE"/>
    <property type="match status" value="1"/>
</dbReference>
<dbReference type="PANTHER" id="PTHR33910:SF1">
    <property type="entry name" value="PROTEIN TRANSLOCASE SUBUNIT SECE"/>
    <property type="match status" value="1"/>
</dbReference>
<dbReference type="Pfam" id="PF00584">
    <property type="entry name" value="SecE"/>
    <property type="match status" value="1"/>
</dbReference>
<dbReference type="PROSITE" id="PS01067">
    <property type="entry name" value="SECE_SEC61G"/>
    <property type="match status" value="1"/>
</dbReference>
<feature type="chain" id="PRO_0000273130" description="Protein translocase subunit SecE">
    <location>
        <begin position="1"/>
        <end position="66"/>
    </location>
</feature>
<feature type="transmembrane region" description="Helical" evidence="1">
    <location>
        <begin position="34"/>
        <end position="54"/>
    </location>
</feature>
<comment type="function">
    <text evidence="1">Essential subunit of the Sec protein translocation channel SecYEG. Clamps together the 2 halves of SecY. May contact the channel plug during translocation.</text>
</comment>
<comment type="subunit">
    <text evidence="1">Component of the Sec protein translocase complex. Heterotrimer consisting of SecY, SecE and SecG subunits. The heterotrimers can form oligomers, although 1 heterotrimer is thought to be able to translocate proteins. Interacts with the ribosome. Interacts with SecDF, and other proteins may be involved. Interacts with SecA.</text>
</comment>
<comment type="subcellular location">
    <subcellularLocation>
        <location evidence="1">Cell inner membrane</location>
        <topology evidence="1">Single-pass membrane protein</topology>
    </subcellularLocation>
</comment>
<comment type="similarity">
    <text evidence="1">Belongs to the SecE/SEC61-gamma family.</text>
</comment>
<evidence type="ECO:0000255" key="1">
    <source>
        <dbReference type="HAMAP-Rule" id="MF_00422"/>
    </source>
</evidence>
<sequence length="66" mass="7725">MFKEYKIYKFFEQVKQEAYKVVWPTKKELTASTLVVIVAVFVFSLICLVLDYGIHNIIQILLNIGK</sequence>
<protein>
    <recommendedName>
        <fullName evidence="1">Protein translocase subunit SecE</fullName>
    </recommendedName>
</protein>
<name>SECE_RICBR</name>
<proteinExistence type="inferred from homology"/>
<accession>Q1RHC4</accession>
<keyword id="KW-0997">Cell inner membrane</keyword>
<keyword id="KW-1003">Cell membrane</keyword>
<keyword id="KW-0472">Membrane</keyword>
<keyword id="KW-0653">Protein transport</keyword>
<keyword id="KW-0811">Translocation</keyword>
<keyword id="KW-0812">Transmembrane</keyword>
<keyword id="KW-1133">Transmembrane helix</keyword>
<keyword id="KW-0813">Transport</keyword>
<gene>
    <name evidence="1" type="primary">secE</name>
    <name type="ordered locus">RBE_1159</name>
</gene>